<protein>
    <recommendedName>
        <fullName evidence="1">Proline--tRNA ligase</fullName>
        <ecNumber evidence="1">6.1.1.15</ecNumber>
    </recommendedName>
    <alternativeName>
        <fullName evidence="1">Prolyl-tRNA synthetase</fullName>
        <shortName evidence="1">ProRS</shortName>
    </alternativeName>
</protein>
<gene>
    <name evidence="1" type="primary">proS</name>
    <name type="ordered locus">Spea_2864</name>
</gene>
<reference key="1">
    <citation type="submission" date="2007-10" db="EMBL/GenBank/DDBJ databases">
        <title>Complete sequence of Shewanella pealeana ATCC 700345.</title>
        <authorList>
            <consortium name="US DOE Joint Genome Institute"/>
            <person name="Copeland A."/>
            <person name="Lucas S."/>
            <person name="Lapidus A."/>
            <person name="Barry K."/>
            <person name="Glavina del Rio T."/>
            <person name="Dalin E."/>
            <person name="Tice H."/>
            <person name="Pitluck S."/>
            <person name="Chertkov O."/>
            <person name="Brettin T."/>
            <person name="Bruce D."/>
            <person name="Detter J.C."/>
            <person name="Han C."/>
            <person name="Schmutz J."/>
            <person name="Larimer F."/>
            <person name="Land M."/>
            <person name="Hauser L."/>
            <person name="Kyrpides N."/>
            <person name="Kim E."/>
            <person name="Zhao J.-S.Z."/>
            <person name="Manno D."/>
            <person name="Hawari J."/>
            <person name="Richardson P."/>
        </authorList>
    </citation>
    <scope>NUCLEOTIDE SEQUENCE [LARGE SCALE GENOMIC DNA]</scope>
    <source>
        <strain>ATCC 700345 / ANG-SQ1</strain>
    </source>
</reference>
<keyword id="KW-0030">Aminoacyl-tRNA synthetase</keyword>
<keyword id="KW-0067">ATP-binding</keyword>
<keyword id="KW-0963">Cytoplasm</keyword>
<keyword id="KW-0436">Ligase</keyword>
<keyword id="KW-0547">Nucleotide-binding</keyword>
<keyword id="KW-0648">Protein biosynthesis</keyword>
<keyword id="KW-1185">Reference proteome</keyword>
<evidence type="ECO:0000255" key="1">
    <source>
        <dbReference type="HAMAP-Rule" id="MF_01569"/>
    </source>
</evidence>
<organism>
    <name type="scientific">Shewanella pealeana (strain ATCC 700345 / ANG-SQ1)</name>
    <dbReference type="NCBI Taxonomy" id="398579"/>
    <lineage>
        <taxon>Bacteria</taxon>
        <taxon>Pseudomonadati</taxon>
        <taxon>Pseudomonadota</taxon>
        <taxon>Gammaproteobacteria</taxon>
        <taxon>Alteromonadales</taxon>
        <taxon>Shewanellaceae</taxon>
        <taxon>Shewanella</taxon>
    </lineage>
</organism>
<dbReference type="EC" id="6.1.1.15" evidence="1"/>
<dbReference type="EMBL" id="CP000851">
    <property type="protein sequence ID" value="ABV88182.1"/>
    <property type="molecule type" value="Genomic_DNA"/>
</dbReference>
<dbReference type="RefSeq" id="WP_012156087.1">
    <property type="nucleotide sequence ID" value="NC_009901.1"/>
</dbReference>
<dbReference type="SMR" id="A8H6J5"/>
<dbReference type="STRING" id="398579.Spea_2864"/>
<dbReference type="KEGG" id="spl:Spea_2864"/>
<dbReference type="eggNOG" id="COG0442">
    <property type="taxonomic scope" value="Bacteria"/>
</dbReference>
<dbReference type="HOGENOM" id="CLU_016739_0_0_6"/>
<dbReference type="OrthoDB" id="9809052at2"/>
<dbReference type="Proteomes" id="UP000002608">
    <property type="component" value="Chromosome"/>
</dbReference>
<dbReference type="GO" id="GO:0005829">
    <property type="term" value="C:cytosol"/>
    <property type="evidence" value="ECO:0007669"/>
    <property type="project" value="TreeGrafter"/>
</dbReference>
<dbReference type="GO" id="GO:0002161">
    <property type="term" value="F:aminoacyl-tRNA deacylase activity"/>
    <property type="evidence" value="ECO:0007669"/>
    <property type="project" value="InterPro"/>
</dbReference>
<dbReference type="GO" id="GO:0005524">
    <property type="term" value="F:ATP binding"/>
    <property type="evidence" value="ECO:0007669"/>
    <property type="project" value="UniProtKB-UniRule"/>
</dbReference>
<dbReference type="GO" id="GO:0004827">
    <property type="term" value="F:proline-tRNA ligase activity"/>
    <property type="evidence" value="ECO:0007669"/>
    <property type="project" value="UniProtKB-UniRule"/>
</dbReference>
<dbReference type="GO" id="GO:0006433">
    <property type="term" value="P:prolyl-tRNA aminoacylation"/>
    <property type="evidence" value="ECO:0007669"/>
    <property type="project" value="UniProtKB-UniRule"/>
</dbReference>
<dbReference type="CDD" id="cd04334">
    <property type="entry name" value="ProRS-INS"/>
    <property type="match status" value="1"/>
</dbReference>
<dbReference type="CDD" id="cd00861">
    <property type="entry name" value="ProRS_anticodon_short"/>
    <property type="match status" value="1"/>
</dbReference>
<dbReference type="CDD" id="cd00779">
    <property type="entry name" value="ProRS_core_prok"/>
    <property type="match status" value="1"/>
</dbReference>
<dbReference type="FunFam" id="3.30.930.10:FF:000043">
    <property type="entry name" value="Proline--tRNA ligase"/>
    <property type="match status" value="1"/>
</dbReference>
<dbReference type="FunFam" id="3.30.930.10:FF:000062">
    <property type="entry name" value="Proline--tRNA ligase"/>
    <property type="match status" value="1"/>
</dbReference>
<dbReference type="FunFam" id="3.40.50.800:FF:000006">
    <property type="entry name" value="Proline--tRNA ligase"/>
    <property type="match status" value="1"/>
</dbReference>
<dbReference type="Gene3D" id="3.40.50.800">
    <property type="entry name" value="Anticodon-binding domain"/>
    <property type="match status" value="1"/>
</dbReference>
<dbReference type="Gene3D" id="3.30.930.10">
    <property type="entry name" value="Bira Bifunctional Protein, Domain 2"/>
    <property type="match status" value="2"/>
</dbReference>
<dbReference type="HAMAP" id="MF_01569">
    <property type="entry name" value="Pro_tRNA_synth_type1"/>
    <property type="match status" value="1"/>
</dbReference>
<dbReference type="InterPro" id="IPR002314">
    <property type="entry name" value="aa-tRNA-synt_IIb"/>
</dbReference>
<dbReference type="InterPro" id="IPR006195">
    <property type="entry name" value="aa-tRNA-synth_II"/>
</dbReference>
<dbReference type="InterPro" id="IPR045864">
    <property type="entry name" value="aa-tRNA-synth_II/BPL/LPL"/>
</dbReference>
<dbReference type="InterPro" id="IPR004154">
    <property type="entry name" value="Anticodon-bd"/>
</dbReference>
<dbReference type="InterPro" id="IPR036621">
    <property type="entry name" value="Anticodon-bd_dom_sf"/>
</dbReference>
<dbReference type="InterPro" id="IPR002316">
    <property type="entry name" value="Pro-tRNA-ligase_IIa"/>
</dbReference>
<dbReference type="InterPro" id="IPR004500">
    <property type="entry name" value="Pro-tRNA-synth_IIa_bac-type"/>
</dbReference>
<dbReference type="InterPro" id="IPR023717">
    <property type="entry name" value="Pro-tRNA-Synthase_IIa_type1"/>
</dbReference>
<dbReference type="InterPro" id="IPR050062">
    <property type="entry name" value="Pro-tRNA_synthetase"/>
</dbReference>
<dbReference type="InterPro" id="IPR044140">
    <property type="entry name" value="ProRS_anticodon_short"/>
</dbReference>
<dbReference type="InterPro" id="IPR033730">
    <property type="entry name" value="ProRS_core_prok"/>
</dbReference>
<dbReference type="InterPro" id="IPR036754">
    <property type="entry name" value="YbaK/aa-tRNA-synt-asso_dom_sf"/>
</dbReference>
<dbReference type="InterPro" id="IPR007214">
    <property type="entry name" value="YbaK/aa-tRNA-synth-assoc-dom"/>
</dbReference>
<dbReference type="NCBIfam" id="NF006625">
    <property type="entry name" value="PRK09194.1"/>
    <property type="match status" value="1"/>
</dbReference>
<dbReference type="NCBIfam" id="TIGR00409">
    <property type="entry name" value="proS_fam_II"/>
    <property type="match status" value="1"/>
</dbReference>
<dbReference type="PANTHER" id="PTHR42753">
    <property type="entry name" value="MITOCHONDRIAL RIBOSOME PROTEIN L39/PROLYL-TRNA LIGASE FAMILY MEMBER"/>
    <property type="match status" value="1"/>
</dbReference>
<dbReference type="PANTHER" id="PTHR42753:SF2">
    <property type="entry name" value="PROLINE--TRNA LIGASE"/>
    <property type="match status" value="1"/>
</dbReference>
<dbReference type="Pfam" id="PF03129">
    <property type="entry name" value="HGTP_anticodon"/>
    <property type="match status" value="1"/>
</dbReference>
<dbReference type="Pfam" id="PF00587">
    <property type="entry name" value="tRNA-synt_2b"/>
    <property type="match status" value="1"/>
</dbReference>
<dbReference type="Pfam" id="PF04073">
    <property type="entry name" value="tRNA_edit"/>
    <property type="match status" value="1"/>
</dbReference>
<dbReference type="PIRSF" id="PIRSF001535">
    <property type="entry name" value="ProRS_1"/>
    <property type="match status" value="1"/>
</dbReference>
<dbReference type="PRINTS" id="PR01046">
    <property type="entry name" value="TRNASYNTHPRO"/>
</dbReference>
<dbReference type="SUPFAM" id="SSF52954">
    <property type="entry name" value="Class II aaRS ABD-related"/>
    <property type="match status" value="1"/>
</dbReference>
<dbReference type="SUPFAM" id="SSF55681">
    <property type="entry name" value="Class II aaRS and biotin synthetases"/>
    <property type="match status" value="1"/>
</dbReference>
<dbReference type="SUPFAM" id="SSF55826">
    <property type="entry name" value="YbaK/ProRS associated domain"/>
    <property type="match status" value="1"/>
</dbReference>
<dbReference type="PROSITE" id="PS50862">
    <property type="entry name" value="AA_TRNA_LIGASE_II"/>
    <property type="match status" value="1"/>
</dbReference>
<comment type="function">
    <text evidence="1">Catalyzes the attachment of proline to tRNA(Pro) in a two-step reaction: proline is first activated by ATP to form Pro-AMP and then transferred to the acceptor end of tRNA(Pro). As ProRS can inadvertently accommodate and process non-cognate amino acids such as alanine and cysteine, to avoid such errors it has two additional distinct editing activities against alanine. One activity is designated as 'pretransfer' editing and involves the tRNA(Pro)-independent hydrolysis of activated Ala-AMP. The other activity is designated 'posttransfer' editing and involves deacylation of mischarged Ala-tRNA(Pro). The misacylated Cys-tRNA(Pro) is not edited by ProRS.</text>
</comment>
<comment type="catalytic activity">
    <reaction evidence="1">
        <text>tRNA(Pro) + L-proline + ATP = L-prolyl-tRNA(Pro) + AMP + diphosphate</text>
        <dbReference type="Rhea" id="RHEA:14305"/>
        <dbReference type="Rhea" id="RHEA-COMP:9700"/>
        <dbReference type="Rhea" id="RHEA-COMP:9702"/>
        <dbReference type="ChEBI" id="CHEBI:30616"/>
        <dbReference type="ChEBI" id="CHEBI:33019"/>
        <dbReference type="ChEBI" id="CHEBI:60039"/>
        <dbReference type="ChEBI" id="CHEBI:78442"/>
        <dbReference type="ChEBI" id="CHEBI:78532"/>
        <dbReference type="ChEBI" id="CHEBI:456215"/>
        <dbReference type="EC" id="6.1.1.15"/>
    </reaction>
</comment>
<comment type="subunit">
    <text evidence="1">Homodimer.</text>
</comment>
<comment type="subcellular location">
    <subcellularLocation>
        <location evidence="1">Cytoplasm</location>
    </subcellularLocation>
</comment>
<comment type="domain">
    <text evidence="1">Consists of three domains: the N-terminal catalytic domain, the editing domain and the C-terminal anticodon-binding domain.</text>
</comment>
<comment type="similarity">
    <text evidence="1">Belongs to the class-II aminoacyl-tRNA synthetase family. ProS type 1 subfamily.</text>
</comment>
<feature type="chain" id="PRO_1000087855" description="Proline--tRNA ligase">
    <location>
        <begin position="1"/>
        <end position="570"/>
    </location>
</feature>
<accession>A8H6J5</accession>
<name>SYP_SHEPA</name>
<sequence>MRVSKYLLSTQKETPANAEVVSHQLMLRAGMIRRNASGLYSWLPTGLRVLRKIEAIVREEMNKAGSVEILMPMVQPADLWVETGRFEKFGPELLRFQDRHNRDFVLGPTHEEVITDIVRKEVNSYKQLPLNLYQIQTKFRDEVRPRFGVMRSREFLMKDAYSFHIDQETMDETYEAMFQAYSNILTRLGLAFRPVMADTGSIGGSMSHEFHVLANSGEDLIAYSTESDYAANIEKCEAPLPTETRQAATSEMTLVDTPNAKTIAELVEQHGIAIEKTVKTLIVKGATEEAPLVAIVIRGDHELNEVKAEKLDAVLAPFEFADEAAIRDAIGAGTGSIGPVGLNMPVFVDHSVSIMSDFGAGANQDGKHYFGINWERDLPEAPAFDLRNIIEGEPSPCGKGTIALLRGIEVGHIFQLGTNYSEAMNANVLDQNGKSQTLLMGCYGVGVSRMVAAAIEQNNDDRGIIWPEAIAPFTVGILPMNMHKSHRVKDIAEQLYQDLNDAGIEVMFDDRKERPGVMFADMELIGIPHVVVIGDRNIDNGMFEYKNRRTGEKQDIPLDQIVEFLKAQQA</sequence>
<proteinExistence type="inferred from homology"/>